<protein>
    <recommendedName>
        <fullName evidence="1">Acetylglutamate kinase</fullName>
        <ecNumber evidence="1">2.7.2.8</ecNumber>
    </recommendedName>
    <alternativeName>
        <fullName evidence="1">N-acetyl-L-glutamate 5-phosphotransferase</fullName>
    </alternativeName>
    <alternativeName>
        <fullName evidence="1">NAG kinase</fullName>
        <shortName evidence="1">NAGK</shortName>
    </alternativeName>
</protein>
<evidence type="ECO:0000255" key="1">
    <source>
        <dbReference type="HAMAP-Rule" id="MF_00082"/>
    </source>
</evidence>
<gene>
    <name evidence="1" type="primary">argB</name>
    <name type="ordered locus">Gbem_3635</name>
</gene>
<accession>B5ED10</accession>
<organism>
    <name type="scientific">Citrifermentans bemidjiense (strain ATCC BAA-1014 / DSM 16622 / JCM 12645 / Bem)</name>
    <name type="common">Geobacter bemidjiensis</name>
    <dbReference type="NCBI Taxonomy" id="404380"/>
    <lineage>
        <taxon>Bacteria</taxon>
        <taxon>Pseudomonadati</taxon>
        <taxon>Thermodesulfobacteriota</taxon>
        <taxon>Desulfuromonadia</taxon>
        <taxon>Geobacterales</taxon>
        <taxon>Geobacteraceae</taxon>
        <taxon>Citrifermentans</taxon>
    </lineage>
</organism>
<sequence length="292" mass="30810">MQQLIEKASTLMEALPYIRRFSGKTIVIKYGGHAMADEKLRKSFALDVILLKYIGINTVVVHGGGPQINETLKRYGIVSEFVKGMRVTDKETMGVVEMVLTGQVNREVVGYINQNGGRAAGLSGKDGDLLICEKLLQEVKSEDGSTETVDIGFVGDVVEVNPAILQALEKGGFIPVIAPVGVGRAGESYNINADVVAGKVAAALNAEKLILLTDVSGVKSKEGELLSSIPLADVPALIDNGTVTGGMIPKVTCCTDALAAGVKKAHIVDGRIEHAILLEIFTNVGIGTEIQA</sequence>
<dbReference type="EC" id="2.7.2.8" evidence="1"/>
<dbReference type="EMBL" id="CP001124">
    <property type="protein sequence ID" value="ACH40627.1"/>
    <property type="molecule type" value="Genomic_DNA"/>
</dbReference>
<dbReference type="RefSeq" id="WP_012532064.1">
    <property type="nucleotide sequence ID" value="NC_011146.1"/>
</dbReference>
<dbReference type="SMR" id="B5ED10"/>
<dbReference type="STRING" id="404380.Gbem_3635"/>
<dbReference type="KEGG" id="gbm:Gbem_3635"/>
<dbReference type="eggNOG" id="COG0548">
    <property type="taxonomic scope" value="Bacteria"/>
</dbReference>
<dbReference type="HOGENOM" id="CLU_053680_0_0_7"/>
<dbReference type="OrthoDB" id="9803155at2"/>
<dbReference type="UniPathway" id="UPA00068">
    <property type="reaction ID" value="UER00107"/>
</dbReference>
<dbReference type="Proteomes" id="UP000008825">
    <property type="component" value="Chromosome"/>
</dbReference>
<dbReference type="GO" id="GO:0005737">
    <property type="term" value="C:cytoplasm"/>
    <property type="evidence" value="ECO:0007669"/>
    <property type="project" value="UniProtKB-SubCell"/>
</dbReference>
<dbReference type="GO" id="GO:0003991">
    <property type="term" value="F:acetylglutamate kinase activity"/>
    <property type="evidence" value="ECO:0007669"/>
    <property type="project" value="UniProtKB-UniRule"/>
</dbReference>
<dbReference type="GO" id="GO:0005524">
    <property type="term" value="F:ATP binding"/>
    <property type="evidence" value="ECO:0007669"/>
    <property type="project" value="UniProtKB-UniRule"/>
</dbReference>
<dbReference type="GO" id="GO:0042450">
    <property type="term" value="P:arginine biosynthetic process via ornithine"/>
    <property type="evidence" value="ECO:0007669"/>
    <property type="project" value="UniProtKB-UniRule"/>
</dbReference>
<dbReference type="GO" id="GO:0006526">
    <property type="term" value="P:L-arginine biosynthetic process"/>
    <property type="evidence" value="ECO:0007669"/>
    <property type="project" value="UniProtKB-UniPathway"/>
</dbReference>
<dbReference type="CDD" id="cd04250">
    <property type="entry name" value="AAK_NAGK-C"/>
    <property type="match status" value="1"/>
</dbReference>
<dbReference type="FunFam" id="3.40.1160.10:FF:000004">
    <property type="entry name" value="Acetylglutamate kinase"/>
    <property type="match status" value="1"/>
</dbReference>
<dbReference type="Gene3D" id="3.40.1160.10">
    <property type="entry name" value="Acetylglutamate kinase-like"/>
    <property type="match status" value="1"/>
</dbReference>
<dbReference type="HAMAP" id="MF_00082">
    <property type="entry name" value="ArgB"/>
    <property type="match status" value="1"/>
</dbReference>
<dbReference type="InterPro" id="IPR036393">
    <property type="entry name" value="AceGlu_kinase-like_sf"/>
</dbReference>
<dbReference type="InterPro" id="IPR004662">
    <property type="entry name" value="AcgluKinase_fam"/>
</dbReference>
<dbReference type="InterPro" id="IPR037528">
    <property type="entry name" value="ArgB"/>
</dbReference>
<dbReference type="InterPro" id="IPR001048">
    <property type="entry name" value="Asp/Glu/Uridylate_kinase"/>
</dbReference>
<dbReference type="InterPro" id="IPR001057">
    <property type="entry name" value="Glu/AcGlu_kinase"/>
</dbReference>
<dbReference type="InterPro" id="IPR041727">
    <property type="entry name" value="NAGK-C"/>
</dbReference>
<dbReference type="NCBIfam" id="TIGR00761">
    <property type="entry name" value="argB"/>
    <property type="match status" value="1"/>
</dbReference>
<dbReference type="PANTHER" id="PTHR23342">
    <property type="entry name" value="N-ACETYLGLUTAMATE SYNTHASE"/>
    <property type="match status" value="1"/>
</dbReference>
<dbReference type="PANTHER" id="PTHR23342:SF0">
    <property type="entry name" value="N-ACETYLGLUTAMATE SYNTHASE, MITOCHONDRIAL"/>
    <property type="match status" value="1"/>
</dbReference>
<dbReference type="Pfam" id="PF00696">
    <property type="entry name" value="AA_kinase"/>
    <property type="match status" value="1"/>
</dbReference>
<dbReference type="PIRSF" id="PIRSF000728">
    <property type="entry name" value="NAGK"/>
    <property type="match status" value="1"/>
</dbReference>
<dbReference type="PRINTS" id="PR00474">
    <property type="entry name" value="GLU5KINASE"/>
</dbReference>
<dbReference type="SUPFAM" id="SSF53633">
    <property type="entry name" value="Carbamate kinase-like"/>
    <property type="match status" value="1"/>
</dbReference>
<reference key="1">
    <citation type="submission" date="2008-07" db="EMBL/GenBank/DDBJ databases">
        <title>Complete sequence of Geobacter bemidjiensis BEM.</title>
        <authorList>
            <consortium name="US DOE Joint Genome Institute"/>
            <person name="Lucas S."/>
            <person name="Copeland A."/>
            <person name="Lapidus A."/>
            <person name="Glavina del Rio T."/>
            <person name="Dalin E."/>
            <person name="Tice H."/>
            <person name="Bruce D."/>
            <person name="Goodwin L."/>
            <person name="Pitluck S."/>
            <person name="Kiss H."/>
            <person name="Brettin T."/>
            <person name="Detter J.C."/>
            <person name="Han C."/>
            <person name="Kuske C.R."/>
            <person name="Schmutz J."/>
            <person name="Larimer F."/>
            <person name="Land M."/>
            <person name="Hauser L."/>
            <person name="Kyrpides N."/>
            <person name="Lykidis A."/>
            <person name="Lovley D."/>
            <person name="Richardson P."/>
        </authorList>
    </citation>
    <scope>NUCLEOTIDE SEQUENCE [LARGE SCALE GENOMIC DNA]</scope>
    <source>
        <strain>ATCC BAA-1014 / DSM 16622 / JCM 12645 / Bem</strain>
    </source>
</reference>
<keyword id="KW-0028">Amino-acid biosynthesis</keyword>
<keyword id="KW-0055">Arginine biosynthesis</keyword>
<keyword id="KW-0067">ATP-binding</keyword>
<keyword id="KW-0963">Cytoplasm</keyword>
<keyword id="KW-0418">Kinase</keyword>
<keyword id="KW-0547">Nucleotide-binding</keyword>
<keyword id="KW-1185">Reference proteome</keyword>
<keyword id="KW-0808">Transferase</keyword>
<proteinExistence type="inferred from homology"/>
<feature type="chain" id="PRO_1000092859" description="Acetylglutamate kinase">
    <location>
        <begin position="1"/>
        <end position="292"/>
    </location>
</feature>
<feature type="binding site" evidence="1">
    <location>
        <begin position="64"/>
        <end position="65"/>
    </location>
    <ligand>
        <name>substrate</name>
    </ligand>
</feature>
<feature type="binding site" evidence="1">
    <location>
        <position position="86"/>
    </location>
    <ligand>
        <name>substrate</name>
    </ligand>
</feature>
<feature type="binding site" evidence="1">
    <location>
        <position position="190"/>
    </location>
    <ligand>
        <name>substrate</name>
    </ligand>
</feature>
<feature type="site" description="Transition state stabilizer" evidence="1">
    <location>
        <position position="29"/>
    </location>
</feature>
<feature type="site" description="Transition state stabilizer" evidence="1">
    <location>
        <position position="250"/>
    </location>
</feature>
<comment type="function">
    <text evidence="1">Catalyzes the ATP-dependent phosphorylation of N-acetyl-L-glutamate.</text>
</comment>
<comment type="catalytic activity">
    <reaction evidence="1">
        <text>N-acetyl-L-glutamate + ATP = N-acetyl-L-glutamyl 5-phosphate + ADP</text>
        <dbReference type="Rhea" id="RHEA:14629"/>
        <dbReference type="ChEBI" id="CHEBI:30616"/>
        <dbReference type="ChEBI" id="CHEBI:44337"/>
        <dbReference type="ChEBI" id="CHEBI:57936"/>
        <dbReference type="ChEBI" id="CHEBI:456216"/>
        <dbReference type="EC" id="2.7.2.8"/>
    </reaction>
</comment>
<comment type="pathway">
    <text evidence="1">Amino-acid biosynthesis; L-arginine biosynthesis; N(2)-acetyl-L-ornithine from L-glutamate: step 2/4.</text>
</comment>
<comment type="subcellular location">
    <subcellularLocation>
        <location evidence="1">Cytoplasm</location>
    </subcellularLocation>
</comment>
<comment type="similarity">
    <text evidence="1">Belongs to the acetylglutamate kinase family. ArgB subfamily.</text>
</comment>
<name>ARGB_CITBB</name>